<reference key="1">
    <citation type="journal article" date="2003" name="Science">
        <title>Role of mobile DNA in the evolution of vancomycin-resistant Enterococcus faecalis.</title>
        <authorList>
            <person name="Paulsen I.T."/>
            <person name="Banerjei L."/>
            <person name="Myers G.S.A."/>
            <person name="Nelson K.E."/>
            <person name="Seshadri R."/>
            <person name="Read T.D."/>
            <person name="Fouts D.E."/>
            <person name="Eisen J.A."/>
            <person name="Gill S.R."/>
            <person name="Heidelberg J.F."/>
            <person name="Tettelin H."/>
            <person name="Dodson R.J."/>
            <person name="Umayam L.A."/>
            <person name="Brinkac L.M."/>
            <person name="Beanan M.J."/>
            <person name="Daugherty S.C."/>
            <person name="DeBoy R.T."/>
            <person name="Durkin S.A."/>
            <person name="Kolonay J.F."/>
            <person name="Madupu R."/>
            <person name="Nelson W.C."/>
            <person name="Vamathevan J.J."/>
            <person name="Tran B."/>
            <person name="Upton J."/>
            <person name="Hansen T."/>
            <person name="Shetty J."/>
            <person name="Khouri H.M."/>
            <person name="Utterback T.R."/>
            <person name="Radune D."/>
            <person name="Ketchum K.A."/>
            <person name="Dougherty B.A."/>
            <person name="Fraser C.M."/>
        </authorList>
    </citation>
    <scope>NUCLEOTIDE SEQUENCE [LARGE SCALE GENOMIC DNA]</scope>
    <source>
        <strain>ATCC 700802 / V583</strain>
    </source>
</reference>
<comment type="function">
    <text evidence="1">Produces ATP from ADP in the presence of a proton gradient across the membrane. The V-type beta chain is a regulatory subunit.</text>
</comment>
<comment type="similarity">
    <text evidence="1">Belongs to the ATPase alpha/beta chains family.</text>
</comment>
<keyword id="KW-0066">ATP synthesis</keyword>
<keyword id="KW-0375">Hydrogen ion transport</keyword>
<keyword id="KW-0406">Ion transport</keyword>
<keyword id="KW-1185">Reference proteome</keyword>
<keyword id="KW-0813">Transport</keyword>
<feature type="chain" id="PRO_1000059370" description="V-type ATP synthase beta chain">
    <location>
        <begin position="1"/>
        <end position="458"/>
    </location>
</feature>
<accession>Q834X8</accession>
<dbReference type="EMBL" id="AE016830">
    <property type="protein sequence ID" value="AAO81290.1"/>
    <property type="molecule type" value="Genomic_DNA"/>
</dbReference>
<dbReference type="RefSeq" id="NP_815220.1">
    <property type="nucleotide sequence ID" value="NC_004668.1"/>
</dbReference>
<dbReference type="RefSeq" id="WP_002357674.1">
    <property type="nucleotide sequence ID" value="NZ_KE136528.1"/>
</dbReference>
<dbReference type="SMR" id="Q834X8"/>
<dbReference type="STRING" id="226185.EF_1499"/>
<dbReference type="EnsemblBacteria" id="AAO81290">
    <property type="protein sequence ID" value="AAO81290"/>
    <property type="gene ID" value="EF_1499"/>
</dbReference>
<dbReference type="KEGG" id="efa:EF1499"/>
<dbReference type="PATRIC" id="fig|226185.45.peg.2001"/>
<dbReference type="eggNOG" id="COG1156">
    <property type="taxonomic scope" value="Bacteria"/>
</dbReference>
<dbReference type="HOGENOM" id="CLU_022916_0_0_9"/>
<dbReference type="Proteomes" id="UP000001415">
    <property type="component" value="Chromosome"/>
</dbReference>
<dbReference type="GO" id="GO:0005524">
    <property type="term" value="F:ATP binding"/>
    <property type="evidence" value="ECO:0007669"/>
    <property type="project" value="UniProtKB-UniRule"/>
</dbReference>
<dbReference type="GO" id="GO:0046933">
    <property type="term" value="F:proton-transporting ATP synthase activity, rotational mechanism"/>
    <property type="evidence" value="ECO:0007669"/>
    <property type="project" value="UniProtKB-UniRule"/>
</dbReference>
<dbReference type="GO" id="GO:0042777">
    <property type="term" value="P:proton motive force-driven plasma membrane ATP synthesis"/>
    <property type="evidence" value="ECO:0007669"/>
    <property type="project" value="UniProtKB-UniRule"/>
</dbReference>
<dbReference type="CDD" id="cd18112">
    <property type="entry name" value="ATP-synt_V_A-type_beta_C"/>
    <property type="match status" value="1"/>
</dbReference>
<dbReference type="CDD" id="cd18118">
    <property type="entry name" value="ATP-synt_V_A-type_beta_N"/>
    <property type="match status" value="1"/>
</dbReference>
<dbReference type="CDD" id="cd01135">
    <property type="entry name" value="V_A-ATPase_B"/>
    <property type="match status" value="1"/>
</dbReference>
<dbReference type="Gene3D" id="3.40.50.12240">
    <property type="match status" value="1"/>
</dbReference>
<dbReference type="HAMAP" id="MF_00310">
    <property type="entry name" value="ATP_synth_B_arch"/>
    <property type="match status" value="1"/>
</dbReference>
<dbReference type="InterPro" id="IPR055190">
    <property type="entry name" value="ATP-synt_VA_C"/>
</dbReference>
<dbReference type="InterPro" id="IPR020003">
    <property type="entry name" value="ATPase_a/bsu_AS"/>
</dbReference>
<dbReference type="InterPro" id="IPR004100">
    <property type="entry name" value="ATPase_F1/V1/A1_a/bsu_N"/>
</dbReference>
<dbReference type="InterPro" id="IPR000194">
    <property type="entry name" value="ATPase_F1/V1/A1_a/bsu_nucl-bd"/>
</dbReference>
<dbReference type="InterPro" id="IPR027417">
    <property type="entry name" value="P-loop_NTPase"/>
</dbReference>
<dbReference type="InterPro" id="IPR022879">
    <property type="entry name" value="V-ATPase_su_B/beta"/>
</dbReference>
<dbReference type="NCBIfam" id="NF003235">
    <property type="entry name" value="PRK04196.1"/>
    <property type="match status" value="1"/>
</dbReference>
<dbReference type="PANTHER" id="PTHR43389">
    <property type="entry name" value="V-TYPE PROTON ATPASE SUBUNIT B"/>
    <property type="match status" value="1"/>
</dbReference>
<dbReference type="PANTHER" id="PTHR43389:SF4">
    <property type="entry name" value="V-TYPE PROTON ATPASE SUBUNIT B"/>
    <property type="match status" value="1"/>
</dbReference>
<dbReference type="Pfam" id="PF00006">
    <property type="entry name" value="ATP-synt_ab"/>
    <property type="match status" value="1"/>
</dbReference>
<dbReference type="Pfam" id="PF02874">
    <property type="entry name" value="ATP-synt_ab_N"/>
    <property type="match status" value="1"/>
</dbReference>
<dbReference type="Pfam" id="PF22919">
    <property type="entry name" value="ATP-synt_VA_C"/>
    <property type="match status" value="1"/>
</dbReference>
<dbReference type="PIRSF" id="PIRSF039114">
    <property type="entry name" value="V-ATPsynth_beta/V-ATPase_B"/>
    <property type="match status" value="1"/>
</dbReference>
<dbReference type="SUPFAM" id="SSF47917">
    <property type="entry name" value="C-terminal domain of alpha and beta subunits of F1 ATP synthase"/>
    <property type="match status" value="1"/>
</dbReference>
<dbReference type="SUPFAM" id="SSF52540">
    <property type="entry name" value="P-loop containing nucleoside triphosphate hydrolases"/>
    <property type="match status" value="1"/>
</dbReference>
<dbReference type="PROSITE" id="PS00152">
    <property type="entry name" value="ATPASE_ALPHA_BETA"/>
    <property type="match status" value="1"/>
</dbReference>
<proteinExistence type="inferred from homology"/>
<protein>
    <recommendedName>
        <fullName evidence="1">V-type ATP synthase beta chain</fullName>
    </recommendedName>
    <alternativeName>
        <fullName evidence="1">V-ATPase subunit B</fullName>
    </alternativeName>
</protein>
<organism>
    <name type="scientific">Enterococcus faecalis (strain ATCC 700802 / V583)</name>
    <dbReference type="NCBI Taxonomy" id="226185"/>
    <lineage>
        <taxon>Bacteria</taxon>
        <taxon>Bacillati</taxon>
        <taxon>Bacillota</taxon>
        <taxon>Bacilli</taxon>
        <taxon>Lactobacillales</taxon>
        <taxon>Enterococcaceae</taxon>
        <taxon>Enterococcus</taxon>
    </lineage>
</organism>
<gene>
    <name evidence="1" type="primary">atpB</name>
    <name type="ordered locus">EF_1499</name>
</gene>
<evidence type="ECO:0000255" key="1">
    <source>
        <dbReference type="HAMAP-Rule" id="MF_00310"/>
    </source>
</evidence>
<sequence>MIKEYRTINEVVGPLMIVEKVAGVKYEELIEVRMQNGEIRQGQVLEINGDKAMVQIFEGTSNINIRDSKVRFLGHPLELGVSPDMMGRVFDGLGRLKDNGPELLPEKKLDINGEVINPVARDYPDEFIQTGISAIDHLNTLVRGQKLPVFSASGLPHKELAAQIARQANVLNSEEEFAVVFAAIGITFEEAEYFMEDFRQTGAIDRSVLFMNLANDPAIERIATPRMALTAAEYLAYEKGMHVLVIMTDMTNYCEALREISAARREVPGRRGYPGYLYTNLATLYERAGRIRGSKGSVTQIPILTMPEEDKTHPIPDLTGYITEGQIILSRELYKSGIQPPIDVLPSLSRLKDKGTGEGKTRGDHAATMNQLFSAYAQGKQAKELAVILGESALSDVDKIYAAFAQRFEEEYVNQGFDTNRSIEETLDLGWELLSMLPRTELKRIKEDMLDQYLTEGK</sequence>
<name>VATB_ENTFA</name>